<keyword id="KW-0002">3D-structure</keyword>
<keyword id="KW-0007">Acetylation</keyword>
<keyword id="KW-0067">ATP-binding</keyword>
<keyword id="KW-0963">Cytoplasm</keyword>
<keyword id="KW-1017">Isopeptide bond</keyword>
<keyword id="KW-0547">Nucleotide-binding</keyword>
<keyword id="KW-0597">Phosphoprotein</keyword>
<keyword id="KW-1185">Reference proteome</keyword>
<keyword id="KW-0808">Transferase</keyword>
<keyword id="KW-0832">Ubl conjugation</keyword>
<keyword id="KW-0833">Ubl conjugation pathway</keyword>
<evidence type="ECO:0000250" key="1">
    <source>
        <dbReference type="UniProtKB" id="P61086"/>
    </source>
</evidence>
<evidence type="ECO:0000255" key="2">
    <source>
        <dbReference type="PROSITE-ProRule" id="PRU00212"/>
    </source>
</evidence>
<evidence type="ECO:0000255" key="3">
    <source>
        <dbReference type="PROSITE-ProRule" id="PRU00388"/>
    </source>
</evidence>
<evidence type="ECO:0000255" key="4">
    <source>
        <dbReference type="PROSITE-ProRule" id="PRU10133"/>
    </source>
</evidence>
<evidence type="ECO:0000269" key="5">
    <source>
    </source>
</evidence>
<evidence type="ECO:0000269" key="6">
    <source>
    </source>
</evidence>
<evidence type="ECO:0000269" key="7">
    <source>
    </source>
</evidence>
<evidence type="ECO:0000305" key="8"/>
<evidence type="ECO:0007829" key="9">
    <source>
        <dbReference type="PDB" id="2BEP"/>
    </source>
</evidence>
<proteinExistence type="evidence at protein level"/>
<sequence length="200" mass="22407">MANIAVQRIKREFKEVLKSEETSKNQIKVDLVDENFTELRGEIAGPPDTPYEGGRYQLEIKIPETYPFNPPKVRFITKIWHPNISSVTGAICLDILKDQWAAAMTLRTVLLSLQALLAAAEPDDPQDAVVANQYKQNPEMFKQTARLWAHVYAGAPVSSPEYTKKIENLCAMGFDRNAVIVALSSKSWDVETATELLLSN</sequence>
<name>UBE2K_BOVIN</name>
<comment type="function">
    <text evidence="1 6">Accepts ubiquitin from the E1 complex and catalyzes its covalent attachment to other proteins. In vitro, in the presence or in the absence of BRCA1-BARD1 E3 ubiquitin-protein ligase complex, catalyzes the synthesis of 'Lys-48'-linked polyubiquitin chains. Does not transfer ubiquitin directly to but elongates monoubiquitinated substrate protein. Mediates the selective degradation of short-lived and abnormal proteins, such as the endoplasmic reticulum-associated degradation (ERAD) of misfolded lumenal proteins. Ubiquitinates huntingtin. May mediate foam cell formation by the suppression of apoptosis of lipid-bearing macrophages through ubiquitination and subsequence degradation of p53/TP53 (By similarity). Proposed to be involved in ubiquitination and proteolytic processing of NF-kappa-B; in vitro supports ubiquitination of NFKB1.</text>
</comment>
<comment type="catalytic activity">
    <reaction evidence="3 4">
        <text>S-ubiquitinyl-[E1 ubiquitin-activating enzyme]-L-cysteine + [E2 ubiquitin-conjugating enzyme]-L-cysteine = [E1 ubiquitin-activating enzyme]-L-cysteine + S-ubiquitinyl-[E2 ubiquitin-conjugating enzyme]-L-cysteine.</text>
        <dbReference type="EC" id="2.3.2.23"/>
    </reaction>
</comment>
<comment type="pathway">
    <text evidence="3">Protein modification; protein ubiquitination.</text>
</comment>
<comment type="subunit">
    <text evidence="1">Interacts with RNF138/NARF. Interacts with BRCA1.</text>
</comment>
<comment type="subcellular location">
    <subcellularLocation>
        <location>Cytoplasm</location>
    </subcellularLocation>
</comment>
<comment type="PTM">
    <text evidence="5">Sumoylation at Lys-14 impairs catalytic activity.</text>
</comment>
<comment type="similarity">
    <text evidence="3">Belongs to the ubiquitin-conjugating enzyme family.</text>
</comment>
<feature type="initiator methionine" description="Removed" evidence="1">
    <location>
        <position position="1"/>
    </location>
</feature>
<feature type="chain" id="PRO_0000082442" description="Ubiquitin-conjugating enzyme E2 K">
    <location>
        <begin position="2"/>
        <end position="200"/>
    </location>
</feature>
<feature type="domain" description="UBC core" evidence="3">
    <location>
        <begin position="4"/>
        <end position="154"/>
    </location>
</feature>
<feature type="domain" description="UBA" evidence="2">
    <location>
        <begin position="160"/>
        <end position="200"/>
    </location>
</feature>
<feature type="active site" description="Glycyl thioester intermediate" evidence="3">
    <location>
        <position position="92"/>
    </location>
</feature>
<feature type="modified residue" description="N-acetylalanine" evidence="1">
    <location>
        <position position="2"/>
    </location>
</feature>
<feature type="modified residue" description="N6-acetyllysine; alternate" evidence="1">
    <location>
        <position position="14"/>
    </location>
</feature>
<feature type="modified residue" description="Phosphoserine" evidence="1">
    <location>
        <position position="159"/>
    </location>
</feature>
<feature type="cross-link" description="Glycyl lysine isopeptide (Lys-Gly) (interchain with G-Cter in SUMO); alternate">
    <location>
        <position position="14"/>
    </location>
</feature>
<feature type="cross-link" description="Glycyl lysine isopeptide (Lys-Gly) (interchain with G-Cter in SUMO1); alternate" evidence="1">
    <location>
        <position position="14"/>
    </location>
</feature>
<feature type="mutagenesis site" description="Inhibits ubiquitin transfer to macromolecular acceptors." evidence="7">
    <original>S</original>
    <variation>Y</variation>
    <location>
        <position position="86"/>
    </location>
</feature>
<feature type="sequence conflict" description="In Ref. 1; AAB19536." evidence="8" ref="1">
    <original>S</original>
    <variation>T</variation>
    <location>
        <position position="23"/>
    </location>
</feature>
<feature type="helix" evidence="9">
    <location>
        <begin position="3"/>
        <end position="18"/>
    </location>
</feature>
<feature type="helix" evidence="9">
    <location>
        <begin position="20"/>
        <end position="23"/>
    </location>
</feature>
<feature type="strand" evidence="9">
    <location>
        <begin position="26"/>
        <end position="31"/>
    </location>
</feature>
<feature type="strand" evidence="9">
    <location>
        <begin position="33"/>
        <end position="44"/>
    </location>
</feature>
<feature type="turn" evidence="9">
    <location>
        <begin position="50"/>
        <end position="53"/>
    </location>
</feature>
<feature type="strand" evidence="9">
    <location>
        <begin position="55"/>
        <end position="61"/>
    </location>
</feature>
<feature type="turn" evidence="9">
    <location>
        <begin position="64"/>
        <end position="67"/>
    </location>
</feature>
<feature type="strand" evidence="9">
    <location>
        <begin position="72"/>
        <end position="77"/>
    </location>
</feature>
<feature type="turn" evidence="9">
    <location>
        <begin position="86"/>
        <end position="88"/>
    </location>
</feature>
<feature type="helix" evidence="9">
    <location>
        <begin position="94"/>
        <end position="96"/>
    </location>
</feature>
<feature type="turn" evidence="9">
    <location>
        <begin position="97"/>
        <end position="99"/>
    </location>
</feature>
<feature type="helix" evidence="9">
    <location>
        <begin position="106"/>
        <end position="118"/>
    </location>
</feature>
<feature type="helix" evidence="9">
    <location>
        <begin position="128"/>
        <end position="136"/>
    </location>
</feature>
<feature type="helix" evidence="9">
    <location>
        <begin position="138"/>
        <end position="152"/>
    </location>
</feature>
<dbReference type="EC" id="2.3.2.23"/>
<dbReference type="EMBL" id="S51016">
    <property type="protein sequence ID" value="AAB19536.1"/>
    <property type="molecule type" value="mRNA"/>
</dbReference>
<dbReference type="EMBL" id="BC142324">
    <property type="protein sequence ID" value="AAI42325.1"/>
    <property type="molecule type" value="mRNA"/>
</dbReference>
<dbReference type="PIR" id="A40797">
    <property type="entry name" value="A40797"/>
</dbReference>
<dbReference type="RefSeq" id="NP_776505.1">
    <property type="nucleotide sequence ID" value="NM_174080.2"/>
</dbReference>
<dbReference type="PDB" id="2BEP">
    <property type="method" value="X-ray"/>
    <property type="resolution" value="1.80 A"/>
    <property type="chains" value="A=1-155"/>
</dbReference>
<dbReference type="PDB" id="2BF8">
    <property type="method" value="X-ray"/>
    <property type="resolution" value="2.30 A"/>
    <property type="chains" value="A=2-155"/>
</dbReference>
<dbReference type="PDBsum" id="2BEP"/>
<dbReference type="PDBsum" id="2BF8"/>
<dbReference type="BMRB" id="P61085"/>
<dbReference type="SMR" id="P61085"/>
<dbReference type="FunCoup" id="P61085">
    <property type="interactions" value="4725"/>
</dbReference>
<dbReference type="STRING" id="9913.ENSBTAP00000026871"/>
<dbReference type="PaxDb" id="9913-ENSBTAP00000026871"/>
<dbReference type="PeptideAtlas" id="P61085"/>
<dbReference type="GeneID" id="281225"/>
<dbReference type="KEGG" id="bta:281225"/>
<dbReference type="CTD" id="3093"/>
<dbReference type="VEuPathDB" id="HostDB:ENSBTAG00000020175"/>
<dbReference type="eggNOG" id="KOG0418">
    <property type="taxonomic scope" value="Eukaryota"/>
</dbReference>
<dbReference type="HOGENOM" id="CLU_030988_13_1_1"/>
<dbReference type="InParanoid" id="P61085"/>
<dbReference type="OMA" id="HWTFVYA"/>
<dbReference type="OrthoDB" id="9993688at2759"/>
<dbReference type="TreeFam" id="TF101127"/>
<dbReference type="Reactome" id="R-BTA-8866652">
    <property type="pathway name" value="Synthesis of active ubiquitin: roles of E1 and E2 enzymes"/>
</dbReference>
<dbReference type="Reactome" id="R-BTA-983168">
    <property type="pathway name" value="Antigen processing: Ubiquitination &amp; Proteasome degradation"/>
</dbReference>
<dbReference type="UniPathway" id="UPA00143"/>
<dbReference type="EvolutionaryTrace" id="P61085"/>
<dbReference type="Proteomes" id="UP000009136">
    <property type="component" value="Chromosome 6"/>
</dbReference>
<dbReference type="Bgee" id="ENSBTAG00000020175">
    <property type="expression patterns" value="Expressed in occipital lobe and 105 other cell types or tissues"/>
</dbReference>
<dbReference type="GO" id="GO:0005737">
    <property type="term" value="C:cytoplasm"/>
    <property type="evidence" value="ECO:0007669"/>
    <property type="project" value="UniProtKB-SubCell"/>
</dbReference>
<dbReference type="GO" id="GO:0005634">
    <property type="term" value="C:nucleus"/>
    <property type="evidence" value="ECO:0000318"/>
    <property type="project" value="GO_Central"/>
</dbReference>
<dbReference type="GO" id="GO:0005524">
    <property type="term" value="F:ATP binding"/>
    <property type="evidence" value="ECO:0007669"/>
    <property type="project" value="UniProtKB-KW"/>
</dbReference>
<dbReference type="GO" id="GO:0061631">
    <property type="term" value="F:ubiquitin conjugating enzyme activity"/>
    <property type="evidence" value="ECO:0000314"/>
    <property type="project" value="MGI"/>
</dbReference>
<dbReference type="GO" id="GO:0031625">
    <property type="term" value="F:ubiquitin protein ligase binding"/>
    <property type="evidence" value="ECO:0000250"/>
    <property type="project" value="UniProtKB"/>
</dbReference>
<dbReference type="GO" id="GO:0004842">
    <property type="term" value="F:ubiquitin-protein transferase activity"/>
    <property type="evidence" value="ECO:0000250"/>
    <property type="project" value="UniProtKB"/>
</dbReference>
<dbReference type="GO" id="GO:0070936">
    <property type="term" value="P:protein K48-linked ubiquitination"/>
    <property type="evidence" value="ECO:0000250"/>
    <property type="project" value="UniProtKB"/>
</dbReference>
<dbReference type="GO" id="GO:0000209">
    <property type="term" value="P:protein polyubiquitination"/>
    <property type="evidence" value="ECO:0000318"/>
    <property type="project" value="GO_Central"/>
</dbReference>
<dbReference type="CDD" id="cd14390">
    <property type="entry name" value="UBA_II_E2_UBE2K"/>
    <property type="match status" value="1"/>
</dbReference>
<dbReference type="CDD" id="cd23800">
    <property type="entry name" value="UBCc_UBE2K"/>
    <property type="match status" value="1"/>
</dbReference>
<dbReference type="FunFam" id="1.10.8.10:FF:000010">
    <property type="entry name" value="Putative ubiquitin-conjugating enzyme e2 k"/>
    <property type="match status" value="1"/>
</dbReference>
<dbReference type="FunFam" id="3.10.110.10:FF:000021">
    <property type="entry name" value="Putative ubiquitin-conjugating enzyme e2 k"/>
    <property type="match status" value="1"/>
</dbReference>
<dbReference type="Gene3D" id="1.10.8.10">
    <property type="entry name" value="DNA helicase RuvA subunit, C-terminal domain"/>
    <property type="match status" value="1"/>
</dbReference>
<dbReference type="Gene3D" id="3.10.110.10">
    <property type="entry name" value="Ubiquitin Conjugating Enzyme"/>
    <property type="match status" value="1"/>
</dbReference>
<dbReference type="InterPro" id="IPR015940">
    <property type="entry name" value="UBA"/>
</dbReference>
<dbReference type="InterPro" id="IPR009060">
    <property type="entry name" value="UBA-like_sf"/>
</dbReference>
<dbReference type="InterPro" id="IPR042599">
    <property type="entry name" value="UBE2K_UBA"/>
</dbReference>
<dbReference type="InterPro" id="IPR000608">
    <property type="entry name" value="UBQ-conjugat_E2_core"/>
</dbReference>
<dbReference type="InterPro" id="IPR023313">
    <property type="entry name" value="UBQ-conjugating_AS"/>
</dbReference>
<dbReference type="InterPro" id="IPR016135">
    <property type="entry name" value="UBQ-conjugating_enzyme/RWD"/>
</dbReference>
<dbReference type="PANTHER" id="PTHR24068">
    <property type="entry name" value="UBIQUITIN-CONJUGATING ENZYME E2"/>
    <property type="match status" value="1"/>
</dbReference>
<dbReference type="Pfam" id="PF00627">
    <property type="entry name" value="UBA"/>
    <property type="match status" value="1"/>
</dbReference>
<dbReference type="Pfam" id="PF00179">
    <property type="entry name" value="UQ_con"/>
    <property type="match status" value="1"/>
</dbReference>
<dbReference type="SMART" id="SM00165">
    <property type="entry name" value="UBA"/>
    <property type="match status" value="1"/>
</dbReference>
<dbReference type="SMART" id="SM00212">
    <property type="entry name" value="UBCc"/>
    <property type="match status" value="1"/>
</dbReference>
<dbReference type="SUPFAM" id="SSF46934">
    <property type="entry name" value="UBA-like"/>
    <property type="match status" value="1"/>
</dbReference>
<dbReference type="SUPFAM" id="SSF54495">
    <property type="entry name" value="UBC-like"/>
    <property type="match status" value="1"/>
</dbReference>
<dbReference type="PROSITE" id="PS50030">
    <property type="entry name" value="UBA"/>
    <property type="match status" value="1"/>
</dbReference>
<dbReference type="PROSITE" id="PS00183">
    <property type="entry name" value="UBC_1"/>
    <property type="match status" value="1"/>
</dbReference>
<dbReference type="PROSITE" id="PS50127">
    <property type="entry name" value="UBC_2"/>
    <property type="match status" value="1"/>
</dbReference>
<gene>
    <name type="primary">UBE2K</name>
    <name type="synonym">HIP2</name>
</gene>
<organism>
    <name type="scientific">Bos taurus</name>
    <name type="common">Bovine</name>
    <dbReference type="NCBI Taxonomy" id="9913"/>
    <lineage>
        <taxon>Eukaryota</taxon>
        <taxon>Metazoa</taxon>
        <taxon>Chordata</taxon>
        <taxon>Craniata</taxon>
        <taxon>Vertebrata</taxon>
        <taxon>Euteleostomi</taxon>
        <taxon>Mammalia</taxon>
        <taxon>Eutheria</taxon>
        <taxon>Laurasiatheria</taxon>
        <taxon>Artiodactyla</taxon>
        <taxon>Ruminantia</taxon>
        <taxon>Pecora</taxon>
        <taxon>Bovidae</taxon>
        <taxon>Bovinae</taxon>
        <taxon>Bos</taxon>
    </lineage>
</organism>
<reference key="1">
    <citation type="journal article" date="1991" name="J. Biol. Chem.">
        <title>Isolation of a cDNA encoding a mammalian multiubiquitinating enzyme (E225K) and overexpression of the functional enzyme in Escherichia coli.</title>
        <authorList>
            <person name="Chen Z."/>
            <person name="Niles E.G."/>
            <person name="Pickart C.M."/>
        </authorList>
    </citation>
    <scope>NUCLEOTIDE SEQUENCE [MRNA]</scope>
    <source>
        <tissue>Thymus</tissue>
    </source>
</reference>
<reference key="2">
    <citation type="journal article" date="1998" name="Biochemistry">
        <title>Core domain mutation (S86Y) selectively inactivates polyubiquitin chain synthesis catalyzed by E2-25K.</title>
        <authorList>
            <person name="Mastrandrea L.D."/>
            <person name="Kasperek E.M."/>
            <person name="Niles E.G."/>
            <person name="Pickart C.M."/>
        </authorList>
    </citation>
    <scope>SEQUENCE REVISION TO 23</scope>
    <scope>MUTAGENESIS OF SER-86</scope>
</reference>
<reference key="3">
    <citation type="submission" date="2007-06" db="EMBL/GenBank/DDBJ databases">
        <authorList>
            <consortium name="NIH - Mammalian Gene Collection (MGC) project"/>
        </authorList>
    </citation>
    <scope>NUCLEOTIDE SEQUENCE [LARGE SCALE MRNA]</scope>
    <source>
        <strain>Hereford</strain>
        <tissue>Thymus</tissue>
    </source>
</reference>
<reference key="4">
    <citation type="journal article" date="1998" name="J. Biol. Chem.">
        <title>Enzymes catalyzing ubiquitination and proteolytic processing of the p105 precursor of nuclear factor kappaB1.</title>
        <authorList>
            <person name="Coux O."/>
            <person name="Goldberg A.L."/>
        </authorList>
    </citation>
    <scope>FUNCTION IN UBIQUITINATION OF NF-KAPPA-B</scope>
</reference>
<reference key="5">
    <citation type="journal article" date="1992" name="J. Biol. Chem.">
        <title>Structure of a diubiquitin conjugate and a model for interaction with ubiquitin conjugating enzyme (E2).</title>
        <authorList>
            <person name="Cook W.J."/>
            <person name="Jeffrey L.C."/>
            <person name="Carson M."/>
            <person name="Chen Z."/>
            <person name="Pickart C.M."/>
        </authorList>
    </citation>
    <scope>X-RAY CRYSTALLOGRAPHY (2.3 ANGSTROMS)</scope>
</reference>
<reference key="6">
    <citation type="journal article" date="2005" name="Nat. Struct. Mol. Biol.">
        <title>SUMO modification of the ubiquitin-conjugating enzyme E2-25K.</title>
        <authorList>
            <person name="Pichler A."/>
            <person name="Knipscheer P."/>
            <person name="Oberhofer E."/>
            <person name="van Dijk W.J."/>
            <person name="Koerner R."/>
            <person name="Olsen J.V."/>
            <person name="Jentsch S."/>
            <person name="Melchior F."/>
            <person name="Sixma T.K."/>
        </authorList>
    </citation>
    <scope>X-RAY CRYSTALLOGRAPHY (1.8 ANGSTROMS)</scope>
    <scope>SUMOYLATION AT LYS-14</scope>
</reference>
<protein>
    <recommendedName>
        <fullName>Ubiquitin-conjugating enzyme E2 K</fullName>
        <ecNumber>2.3.2.23</ecNumber>
    </recommendedName>
    <alternativeName>
        <fullName>E2 ubiquitin-conjugating enzyme K</fullName>
    </alternativeName>
    <alternativeName>
        <fullName>Huntingtin-interacting protein 2</fullName>
        <shortName>HIP-2</shortName>
    </alternativeName>
    <alternativeName>
        <fullName>Ubiquitin carrier protein</fullName>
    </alternativeName>
    <alternativeName>
        <fullName>Ubiquitin-conjugating enzyme E2-25 kDa</fullName>
        <shortName>Ubiquitin-conjugating enzyme E2(25K)</shortName>
        <shortName>Ubiquitin-conjugating enzyme E2-25K</shortName>
    </alternativeName>
    <alternativeName>
        <fullName>Ubiquitin-protein ligase</fullName>
    </alternativeName>
</protein>
<accession>P61085</accession>
<accession>A5PK22</accession>
<accession>O54806</accession>
<accession>P27924</accession>
<accession>Q16721</accession>
<accession>Q9CVV9</accession>